<sequence>MVHLTPEEKTAVNALWGKVNVDAVGGEALGRLLVVYPWTQRFFESFGDLSSPDAVMGNPKVKAHGKKVLGAFSDGLAHLDNLKGTFSQLSELHCDKLHVDPENFRLLGNVLVCVLARNFGKEFTPQVQAAYQKVVAGVANALAHKYH</sequence>
<proteinExistence type="evidence at protein level"/>
<gene>
    <name type="primary">HBD</name>
</gene>
<name>HBD_GORGO</name>
<dbReference type="PIR" id="D90233">
    <property type="entry name" value="HDGO"/>
</dbReference>
<dbReference type="SMR" id="P61773"/>
<dbReference type="FunCoup" id="P61773">
    <property type="interactions" value="22"/>
</dbReference>
<dbReference type="STRING" id="9593.ENSGGOP00000027975"/>
<dbReference type="eggNOG" id="KOG3378">
    <property type="taxonomic scope" value="Eukaryota"/>
</dbReference>
<dbReference type="InParanoid" id="P61773"/>
<dbReference type="Proteomes" id="UP000001519">
    <property type="component" value="Unplaced"/>
</dbReference>
<dbReference type="GO" id="GO:0031838">
    <property type="term" value="C:haptoglobin-hemoglobin complex"/>
    <property type="evidence" value="ECO:0000318"/>
    <property type="project" value="GO_Central"/>
</dbReference>
<dbReference type="GO" id="GO:0005833">
    <property type="term" value="C:hemoglobin complex"/>
    <property type="evidence" value="ECO:0000318"/>
    <property type="project" value="GO_Central"/>
</dbReference>
<dbReference type="GO" id="GO:0020037">
    <property type="term" value="F:heme binding"/>
    <property type="evidence" value="ECO:0000318"/>
    <property type="project" value="GO_Central"/>
</dbReference>
<dbReference type="GO" id="GO:0031721">
    <property type="term" value="F:hemoglobin alpha binding"/>
    <property type="evidence" value="ECO:0000318"/>
    <property type="project" value="GO_Central"/>
</dbReference>
<dbReference type="GO" id="GO:0046872">
    <property type="term" value="F:metal ion binding"/>
    <property type="evidence" value="ECO:0007669"/>
    <property type="project" value="UniProtKB-KW"/>
</dbReference>
<dbReference type="GO" id="GO:0019825">
    <property type="term" value="F:oxygen binding"/>
    <property type="evidence" value="ECO:0000318"/>
    <property type="project" value="GO_Central"/>
</dbReference>
<dbReference type="GO" id="GO:0005344">
    <property type="term" value="F:oxygen carrier activity"/>
    <property type="evidence" value="ECO:0000318"/>
    <property type="project" value="GO_Central"/>
</dbReference>
<dbReference type="GO" id="GO:0098869">
    <property type="term" value="P:cellular oxidant detoxification"/>
    <property type="evidence" value="ECO:0007669"/>
    <property type="project" value="GOC"/>
</dbReference>
<dbReference type="GO" id="GO:0042744">
    <property type="term" value="P:hydrogen peroxide catabolic process"/>
    <property type="evidence" value="ECO:0000318"/>
    <property type="project" value="GO_Central"/>
</dbReference>
<dbReference type="CDD" id="cd08925">
    <property type="entry name" value="Hb-beta-like"/>
    <property type="match status" value="1"/>
</dbReference>
<dbReference type="FunFam" id="1.10.490.10:FF:000001">
    <property type="entry name" value="Hemoglobin subunit beta"/>
    <property type="match status" value="1"/>
</dbReference>
<dbReference type="Gene3D" id="1.10.490.10">
    <property type="entry name" value="Globins"/>
    <property type="match status" value="1"/>
</dbReference>
<dbReference type="InterPro" id="IPR000971">
    <property type="entry name" value="Globin"/>
</dbReference>
<dbReference type="InterPro" id="IPR009050">
    <property type="entry name" value="Globin-like_sf"/>
</dbReference>
<dbReference type="InterPro" id="IPR012292">
    <property type="entry name" value="Globin/Proto"/>
</dbReference>
<dbReference type="InterPro" id="IPR002337">
    <property type="entry name" value="Hemoglobin_b"/>
</dbReference>
<dbReference type="InterPro" id="IPR050056">
    <property type="entry name" value="Hemoglobin_oxygen_transport"/>
</dbReference>
<dbReference type="PANTHER" id="PTHR11442">
    <property type="entry name" value="HEMOGLOBIN FAMILY MEMBER"/>
    <property type="match status" value="1"/>
</dbReference>
<dbReference type="PANTHER" id="PTHR11442:SF42">
    <property type="entry name" value="HEMOGLOBIN SUBUNIT BETA"/>
    <property type="match status" value="1"/>
</dbReference>
<dbReference type="Pfam" id="PF00042">
    <property type="entry name" value="Globin"/>
    <property type="match status" value="1"/>
</dbReference>
<dbReference type="PRINTS" id="PR00814">
    <property type="entry name" value="BETAHAEM"/>
</dbReference>
<dbReference type="SUPFAM" id="SSF46458">
    <property type="entry name" value="Globin-like"/>
    <property type="match status" value="1"/>
</dbReference>
<dbReference type="PROSITE" id="PS01033">
    <property type="entry name" value="GLOBIN"/>
    <property type="match status" value="1"/>
</dbReference>
<accession>P61773</accession>
<accession>P02043</accession>
<comment type="subunit">
    <text>Heterotetramer of two delta chains and two alpha chains.</text>
</comment>
<comment type="tissue specificity">
    <text>Red blood cells.</text>
</comment>
<comment type="similarity">
    <text evidence="2">Belongs to the globin family.</text>
</comment>
<evidence type="ECO:0000250" key="1">
    <source>
        <dbReference type="UniProtKB" id="P02042"/>
    </source>
</evidence>
<evidence type="ECO:0000255" key="2">
    <source>
        <dbReference type="PROSITE-ProRule" id="PRU00238"/>
    </source>
</evidence>
<evidence type="ECO:0000269" key="3">
    <source>
    </source>
</evidence>
<keyword id="KW-0903">Direct protein sequencing</keyword>
<keyword id="KW-0349">Heme</keyword>
<keyword id="KW-0408">Iron</keyword>
<keyword id="KW-0479">Metal-binding</keyword>
<keyword id="KW-0561">Oxygen transport</keyword>
<keyword id="KW-0597">Phosphoprotein</keyword>
<keyword id="KW-1185">Reference proteome</keyword>
<keyword id="KW-0813">Transport</keyword>
<organism>
    <name type="scientific">Gorilla gorilla gorilla</name>
    <name type="common">Western lowland gorilla</name>
    <dbReference type="NCBI Taxonomy" id="9595"/>
    <lineage>
        <taxon>Eukaryota</taxon>
        <taxon>Metazoa</taxon>
        <taxon>Chordata</taxon>
        <taxon>Craniata</taxon>
        <taxon>Vertebrata</taxon>
        <taxon>Euteleostomi</taxon>
        <taxon>Mammalia</taxon>
        <taxon>Eutheria</taxon>
        <taxon>Euarchontoglires</taxon>
        <taxon>Primates</taxon>
        <taxon>Haplorrhini</taxon>
        <taxon>Catarrhini</taxon>
        <taxon>Hominidae</taxon>
        <taxon>Gorilla</taxon>
    </lineage>
</organism>
<reference key="1">
    <citation type="journal article" date="1971" name="Biochem. Genet.">
        <title>Primate hemoglobins: some sequences and some proposals concerning the character of evolution and mutation.</title>
        <authorList>
            <person name="Boyer S.H."/>
            <person name="Crosby E.F."/>
            <person name="Noyes A.N."/>
            <person name="Fuller G.F."/>
            <person name="Leslie S.E."/>
            <person name="Donaldson L.J."/>
            <person name="Vrablik G.R."/>
            <person name="Schaefer E.W. Jr."/>
            <person name="Thurmon T.F."/>
        </authorList>
    </citation>
    <scope>PROTEIN SEQUENCE OF 2-147</scope>
</reference>
<feature type="initiator methionine" description="Removed" evidence="3">
    <location>
        <position position="1"/>
    </location>
</feature>
<feature type="chain" id="PRO_0000053166" description="Hemoglobin subunit delta">
    <location>
        <begin position="2"/>
        <end position="147"/>
    </location>
</feature>
<feature type="domain" description="Globin" evidence="2">
    <location>
        <begin position="3"/>
        <end position="147"/>
    </location>
</feature>
<feature type="binding site" description="distal binding residue">
    <location>
        <position position="64"/>
    </location>
    <ligand>
        <name>heme b</name>
        <dbReference type="ChEBI" id="CHEBI:60344"/>
    </ligand>
    <ligandPart>
        <name>Fe</name>
        <dbReference type="ChEBI" id="CHEBI:18248"/>
    </ligandPart>
</feature>
<feature type="binding site" description="proximal binding residue">
    <location>
        <position position="93"/>
    </location>
    <ligand>
        <name>heme b</name>
        <dbReference type="ChEBI" id="CHEBI:60344"/>
    </ligand>
    <ligandPart>
        <name>Fe</name>
        <dbReference type="ChEBI" id="CHEBI:18248"/>
    </ligandPart>
</feature>
<feature type="modified residue" description="Phosphoserine" evidence="1">
    <location>
        <position position="51"/>
    </location>
</feature>
<feature type="sequence variant" id="VAR_019057" description="In one allele.">
    <original>V</original>
    <variation>A</variation>
    <location>
        <position position="127"/>
    </location>
</feature>
<protein>
    <recommendedName>
        <fullName>Hemoglobin subunit delta</fullName>
    </recommendedName>
    <alternativeName>
        <fullName>Delta-globin</fullName>
    </alternativeName>
    <alternativeName>
        <fullName>Hemoglobin delta chain</fullName>
    </alternativeName>
</protein>